<feature type="chain" id="PRO_0000176646" description="Large ribosomal subunit protein bL9">
    <location>
        <begin position="1"/>
        <end position="149"/>
    </location>
</feature>
<dbReference type="EMBL" id="AE016823">
    <property type="protein sequence ID" value="AAS70681.1"/>
    <property type="molecule type" value="Genomic_DNA"/>
</dbReference>
<dbReference type="RefSeq" id="WP_001263864.1">
    <property type="nucleotide sequence ID" value="NC_005823.1"/>
</dbReference>
<dbReference type="SMR" id="Q72QK3"/>
<dbReference type="GeneID" id="61141995"/>
<dbReference type="KEGG" id="lic:LIC_12110"/>
<dbReference type="HOGENOM" id="CLU_078938_3_0_12"/>
<dbReference type="Proteomes" id="UP000007037">
    <property type="component" value="Chromosome I"/>
</dbReference>
<dbReference type="GO" id="GO:1990904">
    <property type="term" value="C:ribonucleoprotein complex"/>
    <property type="evidence" value="ECO:0007669"/>
    <property type="project" value="UniProtKB-KW"/>
</dbReference>
<dbReference type="GO" id="GO:0005840">
    <property type="term" value="C:ribosome"/>
    <property type="evidence" value="ECO:0007669"/>
    <property type="project" value="UniProtKB-KW"/>
</dbReference>
<dbReference type="GO" id="GO:0019843">
    <property type="term" value="F:rRNA binding"/>
    <property type="evidence" value="ECO:0007669"/>
    <property type="project" value="UniProtKB-UniRule"/>
</dbReference>
<dbReference type="GO" id="GO:0003735">
    <property type="term" value="F:structural constituent of ribosome"/>
    <property type="evidence" value="ECO:0007669"/>
    <property type="project" value="InterPro"/>
</dbReference>
<dbReference type="GO" id="GO:0006412">
    <property type="term" value="P:translation"/>
    <property type="evidence" value="ECO:0007669"/>
    <property type="project" value="UniProtKB-UniRule"/>
</dbReference>
<dbReference type="FunFam" id="3.10.430.100:FF:000011">
    <property type="entry name" value="50S ribosomal protein L9"/>
    <property type="match status" value="1"/>
</dbReference>
<dbReference type="FunFam" id="3.40.5.10:FF:000008">
    <property type="entry name" value="50S ribosomal protein L9"/>
    <property type="match status" value="1"/>
</dbReference>
<dbReference type="Gene3D" id="3.10.430.100">
    <property type="entry name" value="Ribosomal protein L9, C-terminal domain"/>
    <property type="match status" value="1"/>
</dbReference>
<dbReference type="Gene3D" id="3.40.5.10">
    <property type="entry name" value="Ribosomal protein L9, N-terminal domain"/>
    <property type="match status" value="1"/>
</dbReference>
<dbReference type="HAMAP" id="MF_00503">
    <property type="entry name" value="Ribosomal_bL9"/>
    <property type="match status" value="1"/>
</dbReference>
<dbReference type="InterPro" id="IPR000244">
    <property type="entry name" value="Ribosomal_bL9"/>
</dbReference>
<dbReference type="InterPro" id="IPR009027">
    <property type="entry name" value="Ribosomal_bL9/RNase_H1_N"/>
</dbReference>
<dbReference type="InterPro" id="IPR020594">
    <property type="entry name" value="Ribosomal_bL9_bac/chp"/>
</dbReference>
<dbReference type="InterPro" id="IPR020069">
    <property type="entry name" value="Ribosomal_bL9_C"/>
</dbReference>
<dbReference type="InterPro" id="IPR036791">
    <property type="entry name" value="Ribosomal_bL9_C_sf"/>
</dbReference>
<dbReference type="InterPro" id="IPR020070">
    <property type="entry name" value="Ribosomal_bL9_N"/>
</dbReference>
<dbReference type="InterPro" id="IPR036935">
    <property type="entry name" value="Ribosomal_bL9_N_sf"/>
</dbReference>
<dbReference type="NCBIfam" id="TIGR00158">
    <property type="entry name" value="L9"/>
    <property type="match status" value="1"/>
</dbReference>
<dbReference type="PANTHER" id="PTHR21368">
    <property type="entry name" value="50S RIBOSOMAL PROTEIN L9"/>
    <property type="match status" value="1"/>
</dbReference>
<dbReference type="Pfam" id="PF03948">
    <property type="entry name" value="Ribosomal_L9_C"/>
    <property type="match status" value="1"/>
</dbReference>
<dbReference type="Pfam" id="PF01281">
    <property type="entry name" value="Ribosomal_L9_N"/>
    <property type="match status" value="1"/>
</dbReference>
<dbReference type="SUPFAM" id="SSF55658">
    <property type="entry name" value="L9 N-domain-like"/>
    <property type="match status" value="1"/>
</dbReference>
<dbReference type="SUPFAM" id="SSF55653">
    <property type="entry name" value="Ribosomal protein L9 C-domain"/>
    <property type="match status" value="1"/>
</dbReference>
<dbReference type="PROSITE" id="PS00651">
    <property type="entry name" value="RIBOSOMAL_L9"/>
    <property type="match status" value="1"/>
</dbReference>
<gene>
    <name evidence="1" type="primary">rplI</name>
    <name type="ordered locus">LIC_12110</name>
</gene>
<evidence type="ECO:0000255" key="1">
    <source>
        <dbReference type="HAMAP-Rule" id="MF_00503"/>
    </source>
</evidence>
<evidence type="ECO:0000305" key="2"/>
<organism>
    <name type="scientific">Leptospira interrogans serogroup Icterohaemorrhagiae serovar copenhageni (strain Fiocruz L1-130)</name>
    <dbReference type="NCBI Taxonomy" id="267671"/>
    <lineage>
        <taxon>Bacteria</taxon>
        <taxon>Pseudomonadati</taxon>
        <taxon>Spirochaetota</taxon>
        <taxon>Spirochaetia</taxon>
        <taxon>Leptospirales</taxon>
        <taxon>Leptospiraceae</taxon>
        <taxon>Leptospira</taxon>
    </lineage>
</organism>
<accession>Q72QK3</accession>
<keyword id="KW-0687">Ribonucleoprotein</keyword>
<keyword id="KW-0689">Ribosomal protein</keyword>
<keyword id="KW-0694">RNA-binding</keyword>
<keyword id="KW-0699">rRNA-binding</keyword>
<sequence>MRVILQKDVINLGDAGDLKEVADGYARNFLFPKRLAVRANEGNTKAALHQKKLGELKREKRKKAMEDVGGNLNGKEYEILVKTGGGEKLFGAVTPIDVASILKKNGFELDKRKIEIAEPIRNLGSYKIKIRLAEGIQPTITLHVKKEEE</sequence>
<comment type="function">
    <text evidence="1">Binds to the 23S rRNA.</text>
</comment>
<comment type="similarity">
    <text evidence="1">Belongs to the bacterial ribosomal protein bL9 family.</text>
</comment>
<protein>
    <recommendedName>
        <fullName evidence="1">Large ribosomal subunit protein bL9</fullName>
    </recommendedName>
    <alternativeName>
        <fullName evidence="2">50S ribosomal protein L9</fullName>
    </alternativeName>
</protein>
<proteinExistence type="inferred from homology"/>
<name>RL9_LEPIC</name>
<reference key="1">
    <citation type="journal article" date="2004" name="J. Bacteriol.">
        <title>Comparative genomics of two Leptospira interrogans serovars reveals novel insights into physiology and pathogenesis.</title>
        <authorList>
            <person name="Nascimento A.L.T.O."/>
            <person name="Ko A.I."/>
            <person name="Martins E.A.L."/>
            <person name="Monteiro-Vitorello C.B."/>
            <person name="Ho P.L."/>
            <person name="Haake D.A."/>
            <person name="Verjovski-Almeida S."/>
            <person name="Hartskeerl R.A."/>
            <person name="Marques M.V."/>
            <person name="Oliveira M.C."/>
            <person name="Menck C.F.M."/>
            <person name="Leite L.C.C."/>
            <person name="Carrer H."/>
            <person name="Coutinho L.L."/>
            <person name="Degrave W.M."/>
            <person name="Dellagostin O.A."/>
            <person name="El-Dorry H."/>
            <person name="Ferro E.S."/>
            <person name="Ferro M.I.T."/>
            <person name="Furlan L.R."/>
            <person name="Gamberini M."/>
            <person name="Giglioti E.A."/>
            <person name="Goes-Neto A."/>
            <person name="Goldman G.H."/>
            <person name="Goldman M.H.S."/>
            <person name="Harakava R."/>
            <person name="Jeronimo S.M.B."/>
            <person name="Junqueira-de-Azevedo I.L.M."/>
            <person name="Kimura E.T."/>
            <person name="Kuramae E.E."/>
            <person name="Lemos E.G.M."/>
            <person name="Lemos M.V.F."/>
            <person name="Marino C.L."/>
            <person name="Nunes L.R."/>
            <person name="de Oliveira R.C."/>
            <person name="Pereira G.G."/>
            <person name="Reis M.S."/>
            <person name="Schriefer A."/>
            <person name="Siqueira W.J."/>
            <person name="Sommer P."/>
            <person name="Tsai S.M."/>
            <person name="Simpson A.J.G."/>
            <person name="Ferro J.A."/>
            <person name="Camargo L.E.A."/>
            <person name="Kitajima J.P."/>
            <person name="Setubal J.C."/>
            <person name="Van Sluys M.A."/>
        </authorList>
    </citation>
    <scope>NUCLEOTIDE SEQUENCE [LARGE SCALE GENOMIC DNA]</scope>
    <source>
        <strain>Fiocruz L1-130</strain>
    </source>
</reference>